<proteinExistence type="inferred from homology"/>
<organism>
    <name type="scientific">Salmonella typhimurium (strain LT2 / SGSC1412 / ATCC 700720)</name>
    <dbReference type="NCBI Taxonomy" id="99287"/>
    <lineage>
        <taxon>Bacteria</taxon>
        <taxon>Pseudomonadati</taxon>
        <taxon>Pseudomonadota</taxon>
        <taxon>Gammaproteobacteria</taxon>
        <taxon>Enterobacterales</taxon>
        <taxon>Enterobacteriaceae</taxon>
        <taxon>Salmonella</taxon>
    </lineage>
</organism>
<name>USPB_SALTY</name>
<reference key="1">
    <citation type="journal article" date="2001" name="Nature">
        <title>Complete genome sequence of Salmonella enterica serovar Typhimurium LT2.</title>
        <authorList>
            <person name="McClelland M."/>
            <person name="Sanderson K.E."/>
            <person name="Spieth J."/>
            <person name="Clifton S.W."/>
            <person name="Latreille P."/>
            <person name="Courtney L."/>
            <person name="Porwollik S."/>
            <person name="Ali J."/>
            <person name="Dante M."/>
            <person name="Du F."/>
            <person name="Hou S."/>
            <person name="Layman D."/>
            <person name="Leonard S."/>
            <person name="Nguyen C."/>
            <person name="Scott K."/>
            <person name="Holmes A."/>
            <person name="Grewal N."/>
            <person name="Mulvaney E."/>
            <person name="Ryan E."/>
            <person name="Sun H."/>
            <person name="Florea L."/>
            <person name="Miller W."/>
            <person name="Stoneking T."/>
            <person name="Nhan M."/>
            <person name="Waterston R."/>
            <person name="Wilson R.K."/>
        </authorList>
    </citation>
    <scope>NUCLEOTIDE SEQUENCE [LARGE SCALE GENOMIC DNA]</scope>
    <source>
        <strain>LT2 / SGSC1412 / ATCC 700720</strain>
    </source>
</reference>
<comment type="subcellular location">
    <subcellularLocation>
        <location evidence="1">Cell inner membrane</location>
        <topology evidence="1">Multi-pass membrane protein</topology>
    </subcellularLocation>
</comment>
<comment type="similarity">
    <text evidence="3">Belongs to the universal stress protein B family.</text>
</comment>
<accession>P67686</accession>
<accession>Q8XFE3</accession>
<protein>
    <recommendedName>
        <fullName>Universal stress protein B</fullName>
    </recommendedName>
</protein>
<sequence>MISTVSLFWALCVVCIVNMARYFSSLRALLVVLRGCDPLLYQYVDGGGFFTTHGQPNKQVRLVWYIYAQRYRDHHDEEFIRRCERVRRQFLLTSALCGLVVVSLIALMIWH</sequence>
<gene>
    <name type="primary">uspB</name>
    <name type="ordered locus">STM3590</name>
</gene>
<dbReference type="EMBL" id="AE006468">
    <property type="protein sequence ID" value="AAL22450.1"/>
    <property type="molecule type" value="Genomic_DNA"/>
</dbReference>
<dbReference type="RefSeq" id="NP_462491.1">
    <property type="nucleotide sequence ID" value="NC_003197.2"/>
</dbReference>
<dbReference type="RefSeq" id="WP_000626193.1">
    <property type="nucleotide sequence ID" value="NC_003197.2"/>
</dbReference>
<dbReference type="STRING" id="99287.STM3590"/>
<dbReference type="PaxDb" id="99287-STM3590"/>
<dbReference type="GeneID" id="1255113"/>
<dbReference type="GeneID" id="66757914"/>
<dbReference type="KEGG" id="stm:STM3590"/>
<dbReference type="PATRIC" id="fig|99287.12.peg.3794"/>
<dbReference type="HOGENOM" id="CLU_151816_0_0_6"/>
<dbReference type="OMA" id="THGQLNK"/>
<dbReference type="PhylomeDB" id="P67686"/>
<dbReference type="BioCyc" id="SENT99287:STM3590-MONOMER"/>
<dbReference type="Proteomes" id="UP000001014">
    <property type="component" value="Chromosome"/>
</dbReference>
<dbReference type="GO" id="GO:0005886">
    <property type="term" value="C:plasma membrane"/>
    <property type="evidence" value="ECO:0007669"/>
    <property type="project" value="UniProtKB-SubCell"/>
</dbReference>
<dbReference type="HAMAP" id="MF_01088">
    <property type="entry name" value="UspB"/>
    <property type="match status" value="1"/>
</dbReference>
<dbReference type="InterPro" id="IPR019598">
    <property type="entry name" value="Universal_stress_protein_B"/>
</dbReference>
<dbReference type="NCBIfam" id="NF003435">
    <property type="entry name" value="PRK04960.1"/>
    <property type="match status" value="1"/>
</dbReference>
<dbReference type="Pfam" id="PF10625">
    <property type="entry name" value="UspB"/>
    <property type="match status" value="1"/>
</dbReference>
<evidence type="ECO:0000250" key="1"/>
<evidence type="ECO:0000255" key="2"/>
<evidence type="ECO:0000305" key="3"/>
<keyword id="KW-0997">Cell inner membrane</keyword>
<keyword id="KW-1003">Cell membrane</keyword>
<keyword id="KW-0472">Membrane</keyword>
<keyword id="KW-1185">Reference proteome</keyword>
<keyword id="KW-0812">Transmembrane</keyword>
<keyword id="KW-1133">Transmembrane helix</keyword>
<feature type="chain" id="PRO_0000212047" description="Universal stress protein B">
    <location>
        <begin position="1"/>
        <end position="111"/>
    </location>
</feature>
<feature type="transmembrane region" description="Helical" evidence="2">
    <location>
        <begin position="1"/>
        <end position="21"/>
    </location>
</feature>
<feature type="topological domain" description="Cytoplasmic" evidence="2">
    <location>
        <begin position="22"/>
        <end position="89"/>
    </location>
</feature>
<feature type="transmembrane region" description="Helical" evidence="2">
    <location>
        <begin position="90"/>
        <end position="110"/>
    </location>
</feature>
<feature type="topological domain" description="Periplasmic" evidence="2">
    <location>
        <position position="111"/>
    </location>
</feature>